<protein>
    <recommendedName>
        <fullName evidence="1">Elongation factor G</fullName>
        <shortName evidence="1">EF-G</shortName>
    </recommendedName>
</protein>
<dbReference type="EMBL" id="CP001096">
    <property type="protein sequence ID" value="ACF02170.1"/>
    <property type="molecule type" value="Genomic_DNA"/>
</dbReference>
<dbReference type="RefSeq" id="WP_011158797.1">
    <property type="nucleotide sequence ID" value="NC_011004.1"/>
</dbReference>
<dbReference type="SMR" id="B3QBY3"/>
<dbReference type="GeneID" id="66894339"/>
<dbReference type="KEGG" id="rpt:Rpal_3670"/>
<dbReference type="HOGENOM" id="CLU_002794_4_1_5"/>
<dbReference type="OrthoDB" id="9802948at2"/>
<dbReference type="Proteomes" id="UP000001725">
    <property type="component" value="Chromosome"/>
</dbReference>
<dbReference type="GO" id="GO:0005737">
    <property type="term" value="C:cytoplasm"/>
    <property type="evidence" value="ECO:0007669"/>
    <property type="project" value="UniProtKB-SubCell"/>
</dbReference>
<dbReference type="GO" id="GO:0005525">
    <property type="term" value="F:GTP binding"/>
    <property type="evidence" value="ECO:0007669"/>
    <property type="project" value="UniProtKB-UniRule"/>
</dbReference>
<dbReference type="GO" id="GO:0003924">
    <property type="term" value="F:GTPase activity"/>
    <property type="evidence" value="ECO:0007669"/>
    <property type="project" value="InterPro"/>
</dbReference>
<dbReference type="GO" id="GO:0097216">
    <property type="term" value="F:guanosine tetraphosphate binding"/>
    <property type="evidence" value="ECO:0007669"/>
    <property type="project" value="UniProtKB-ARBA"/>
</dbReference>
<dbReference type="GO" id="GO:0003746">
    <property type="term" value="F:translation elongation factor activity"/>
    <property type="evidence" value="ECO:0007669"/>
    <property type="project" value="UniProtKB-UniRule"/>
</dbReference>
<dbReference type="GO" id="GO:0032790">
    <property type="term" value="P:ribosome disassembly"/>
    <property type="evidence" value="ECO:0007669"/>
    <property type="project" value="TreeGrafter"/>
</dbReference>
<dbReference type="CDD" id="cd01886">
    <property type="entry name" value="EF-G"/>
    <property type="match status" value="1"/>
</dbReference>
<dbReference type="CDD" id="cd16262">
    <property type="entry name" value="EFG_III"/>
    <property type="match status" value="1"/>
</dbReference>
<dbReference type="CDD" id="cd01434">
    <property type="entry name" value="EFG_mtEFG1_IV"/>
    <property type="match status" value="1"/>
</dbReference>
<dbReference type="CDD" id="cd03713">
    <property type="entry name" value="EFG_mtEFG_C"/>
    <property type="match status" value="1"/>
</dbReference>
<dbReference type="CDD" id="cd04088">
    <property type="entry name" value="EFG_mtEFG_II"/>
    <property type="match status" value="1"/>
</dbReference>
<dbReference type="FunFam" id="2.40.30.10:FF:000006">
    <property type="entry name" value="Elongation factor G"/>
    <property type="match status" value="1"/>
</dbReference>
<dbReference type="FunFam" id="3.30.230.10:FF:000003">
    <property type="entry name" value="Elongation factor G"/>
    <property type="match status" value="1"/>
</dbReference>
<dbReference type="FunFam" id="3.30.70.240:FF:000001">
    <property type="entry name" value="Elongation factor G"/>
    <property type="match status" value="1"/>
</dbReference>
<dbReference type="FunFam" id="3.30.70.870:FF:000001">
    <property type="entry name" value="Elongation factor G"/>
    <property type="match status" value="1"/>
</dbReference>
<dbReference type="FunFam" id="3.40.50.300:FF:000029">
    <property type="entry name" value="Elongation factor G"/>
    <property type="match status" value="1"/>
</dbReference>
<dbReference type="Gene3D" id="3.30.230.10">
    <property type="match status" value="1"/>
</dbReference>
<dbReference type="Gene3D" id="3.30.70.240">
    <property type="match status" value="1"/>
</dbReference>
<dbReference type="Gene3D" id="3.30.70.870">
    <property type="entry name" value="Elongation Factor G (Translational Gtpase), domain 3"/>
    <property type="match status" value="1"/>
</dbReference>
<dbReference type="Gene3D" id="3.40.50.300">
    <property type="entry name" value="P-loop containing nucleotide triphosphate hydrolases"/>
    <property type="match status" value="1"/>
</dbReference>
<dbReference type="Gene3D" id="2.40.30.10">
    <property type="entry name" value="Translation factors"/>
    <property type="match status" value="1"/>
</dbReference>
<dbReference type="HAMAP" id="MF_00054_B">
    <property type="entry name" value="EF_G_EF_2_B"/>
    <property type="match status" value="1"/>
</dbReference>
<dbReference type="InterPro" id="IPR041095">
    <property type="entry name" value="EFG_II"/>
</dbReference>
<dbReference type="InterPro" id="IPR009022">
    <property type="entry name" value="EFG_III"/>
</dbReference>
<dbReference type="InterPro" id="IPR035647">
    <property type="entry name" value="EFG_III/V"/>
</dbReference>
<dbReference type="InterPro" id="IPR047872">
    <property type="entry name" value="EFG_IV"/>
</dbReference>
<dbReference type="InterPro" id="IPR035649">
    <property type="entry name" value="EFG_V"/>
</dbReference>
<dbReference type="InterPro" id="IPR000640">
    <property type="entry name" value="EFG_V-like"/>
</dbReference>
<dbReference type="InterPro" id="IPR004161">
    <property type="entry name" value="EFTu-like_2"/>
</dbReference>
<dbReference type="InterPro" id="IPR031157">
    <property type="entry name" value="G_TR_CS"/>
</dbReference>
<dbReference type="InterPro" id="IPR027417">
    <property type="entry name" value="P-loop_NTPase"/>
</dbReference>
<dbReference type="InterPro" id="IPR020568">
    <property type="entry name" value="Ribosomal_Su5_D2-typ_SF"/>
</dbReference>
<dbReference type="InterPro" id="IPR014721">
    <property type="entry name" value="Ribsml_uS5_D2-typ_fold_subgr"/>
</dbReference>
<dbReference type="InterPro" id="IPR005225">
    <property type="entry name" value="Small_GTP-bd"/>
</dbReference>
<dbReference type="InterPro" id="IPR000795">
    <property type="entry name" value="T_Tr_GTP-bd_dom"/>
</dbReference>
<dbReference type="InterPro" id="IPR009000">
    <property type="entry name" value="Transl_B-barrel_sf"/>
</dbReference>
<dbReference type="InterPro" id="IPR004540">
    <property type="entry name" value="Transl_elong_EFG/EF2"/>
</dbReference>
<dbReference type="InterPro" id="IPR005517">
    <property type="entry name" value="Transl_elong_EFG/EF2_IV"/>
</dbReference>
<dbReference type="NCBIfam" id="TIGR00484">
    <property type="entry name" value="EF-G"/>
    <property type="match status" value="1"/>
</dbReference>
<dbReference type="NCBIfam" id="NF009379">
    <property type="entry name" value="PRK12740.1-3"/>
    <property type="match status" value="1"/>
</dbReference>
<dbReference type="NCBIfam" id="NF009381">
    <property type="entry name" value="PRK12740.1-5"/>
    <property type="match status" value="1"/>
</dbReference>
<dbReference type="NCBIfam" id="TIGR00231">
    <property type="entry name" value="small_GTP"/>
    <property type="match status" value="1"/>
</dbReference>
<dbReference type="PANTHER" id="PTHR43261:SF1">
    <property type="entry name" value="RIBOSOME-RELEASING FACTOR 2, MITOCHONDRIAL"/>
    <property type="match status" value="1"/>
</dbReference>
<dbReference type="PANTHER" id="PTHR43261">
    <property type="entry name" value="TRANSLATION ELONGATION FACTOR G-RELATED"/>
    <property type="match status" value="1"/>
</dbReference>
<dbReference type="Pfam" id="PF00679">
    <property type="entry name" value="EFG_C"/>
    <property type="match status" value="1"/>
</dbReference>
<dbReference type="Pfam" id="PF14492">
    <property type="entry name" value="EFG_III"/>
    <property type="match status" value="1"/>
</dbReference>
<dbReference type="Pfam" id="PF03764">
    <property type="entry name" value="EFG_IV"/>
    <property type="match status" value="1"/>
</dbReference>
<dbReference type="Pfam" id="PF00009">
    <property type="entry name" value="GTP_EFTU"/>
    <property type="match status" value="1"/>
</dbReference>
<dbReference type="Pfam" id="PF03144">
    <property type="entry name" value="GTP_EFTU_D2"/>
    <property type="match status" value="1"/>
</dbReference>
<dbReference type="PRINTS" id="PR00315">
    <property type="entry name" value="ELONGATNFCT"/>
</dbReference>
<dbReference type="SMART" id="SM00838">
    <property type="entry name" value="EFG_C"/>
    <property type="match status" value="1"/>
</dbReference>
<dbReference type="SMART" id="SM00889">
    <property type="entry name" value="EFG_IV"/>
    <property type="match status" value="1"/>
</dbReference>
<dbReference type="SUPFAM" id="SSF54980">
    <property type="entry name" value="EF-G C-terminal domain-like"/>
    <property type="match status" value="2"/>
</dbReference>
<dbReference type="SUPFAM" id="SSF52540">
    <property type="entry name" value="P-loop containing nucleoside triphosphate hydrolases"/>
    <property type="match status" value="1"/>
</dbReference>
<dbReference type="SUPFAM" id="SSF54211">
    <property type="entry name" value="Ribosomal protein S5 domain 2-like"/>
    <property type="match status" value="1"/>
</dbReference>
<dbReference type="SUPFAM" id="SSF50447">
    <property type="entry name" value="Translation proteins"/>
    <property type="match status" value="1"/>
</dbReference>
<dbReference type="PROSITE" id="PS00301">
    <property type="entry name" value="G_TR_1"/>
    <property type="match status" value="1"/>
</dbReference>
<dbReference type="PROSITE" id="PS51722">
    <property type="entry name" value="G_TR_2"/>
    <property type="match status" value="1"/>
</dbReference>
<feature type="chain" id="PRO_1000091753" description="Elongation factor G">
    <location>
        <begin position="1"/>
        <end position="690"/>
    </location>
</feature>
<feature type="domain" description="tr-type G">
    <location>
        <begin position="8"/>
        <end position="283"/>
    </location>
</feature>
<feature type="binding site" evidence="1">
    <location>
        <begin position="17"/>
        <end position="24"/>
    </location>
    <ligand>
        <name>GTP</name>
        <dbReference type="ChEBI" id="CHEBI:37565"/>
    </ligand>
</feature>
<feature type="binding site" evidence="1">
    <location>
        <begin position="81"/>
        <end position="85"/>
    </location>
    <ligand>
        <name>GTP</name>
        <dbReference type="ChEBI" id="CHEBI:37565"/>
    </ligand>
</feature>
<feature type="binding site" evidence="1">
    <location>
        <begin position="135"/>
        <end position="138"/>
    </location>
    <ligand>
        <name>GTP</name>
        <dbReference type="ChEBI" id="CHEBI:37565"/>
    </ligand>
</feature>
<evidence type="ECO:0000255" key="1">
    <source>
        <dbReference type="HAMAP-Rule" id="MF_00054"/>
    </source>
</evidence>
<accession>B3QBY3</accession>
<name>EFG_RHOPT</name>
<organism>
    <name type="scientific">Rhodopseudomonas palustris (strain TIE-1)</name>
    <dbReference type="NCBI Taxonomy" id="395960"/>
    <lineage>
        <taxon>Bacteria</taxon>
        <taxon>Pseudomonadati</taxon>
        <taxon>Pseudomonadota</taxon>
        <taxon>Alphaproteobacteria</taxon>
        <taxon>Hyphomicrobiales</taxon>
        <taxon>Nitrobacteraceae</taxon>
        <taxon>Rhodopseudomonas</taxon>
    </lineage>
</organism>
<reference key="1">
    <citation type="submission" date="2008-05" db="EMBL/GenBank/DDBJ databases">
        <title>Complete sequence of Rhodopseudomonas palustris TIE-1.</title>
        <authorList>
            <consortium name="US DOE Joint Genome Institute"/>
            <person name="Lucas S."/>
            <person name="Copeland A."/>
            <person name="Lapidus A."/>
            <person name="Glavina del Rio T."/>
            <person name="Dalin E."/>
            <person name="Tice H."/>
            <person name="Pitluck S."/>
            <person name="Chain P."/>
            <person name="Malfatti S."/>
            <person name="Shin M."/>
            <person name="Vergez L."/>
            <person name="Lang D."/>
            <person name="Schmutz J."/>
            <person name="Larimer F."/>
            <person name="Land M."/>
            <person name="Hauser L."/>
            <person name="Kyrpides N."/>
            <person name="Mikhailova N."/>
            <person name="Emerson D."/>
            <person name="Newman D.K."/>
            <person name="Roden E."/>
            <person name="Richardson P."/>
        </authorList>
    </citation>
    <scope>NUCLEOTIDE SEQUENCE [LARGE SCALE GENOMIC DNA]</scope>
    <source>
        <strain>TIE-1</strain>
    </source>
</reference>
<gene>
    <name evidence="1" type="primary">fusA</name>
    <name type="ordered locus">Rpal_3670</name>
</gene>
<keyword id="KW-0963">Cytoplasm</keyword>
<keyword id="KW-0251">Elongation factor</keyword>
<keyword id="KW-0342">GTP-binding</keyword>
<keyword id="KW-0547">Nucleotide-binding</keyword>
<keyword id="KW-0648">Protein biosynthesis</keyword>
<comment type="function">
    <text evidence="1">Catalyzes the GTP-dependent ribosomal translocation step during translation elongation. During this step, the ribosome changes from the pre-translocational (PRE) to the post-translocational (POST) state as the newly formed A-site-bound peptidyl-tRNA and P-site-bound deacylated tRNA move to the P and E sites, respectively. Catalyzes the coordinated movement of the two tRNA molecules, the mRNA and conformational changes in the ribosome.</text>
</comment>
<comment type="subcellular location">
    <subcellularLocation>
        <location evidence="1">Cytoplasm</location>
    </subcellularLocation>
</comment>
<comment type="similarity">
    <text evidence="1">Belongs to the TRAFAC class translation factor GTPase superfamily. Classic translation factor GTPase family. EF-G/EF-2 subfamily.</text>
</comment>
<sequence length="690" mass="75600">MPRVHAIEDYRNFGIMAHIDAGKTTTTERILFYTGKSHKIGEVHEGAATMDWMTQEQERGITITSAATTAFWNGKRLNIIDTPGHVDFTIEVERSLRVLDGAVCVLDSNQGVEPQTETVWRQGDKYKVPRIVFANKMDKTGADFFKCLQDIVDRLGAKPVAIQLPIGSENNFKGVIDLVRMKAVVWNDESLGAKFEDAEIPAELLDQAKEYREKMIEAAVELDDDAMSAYLEGNEPDEATLKRLIRKAVLTGAFYPVLCGSAFKNKGVQPLLDAVVDYLPSPLDVPAIKGTDDKGNEVVRKADDKEPLSLLAFKIMDDPFVGTITFCRIYSGVLLSGTGVVNSTREKKERIGRMLLMHANNREDIKEAYAGDIVALAGLKEARTGDTLCDPANPVILEKMEFPEPVIEIAIEPKSKADQEKLGVALAKLAAEDPSFRVSTDLESGQTILKGMGELHLDIKVDILKRTYKVDANIGAPQVAFRERITKKAEVDYTHKKQTGGTGQFAAVSFVVEPNEPGGGYVFESKIVGGAVPKEYIPGVEKGIESVLSSGVVAGFPVVDVKVTLVDGKYHDVDSSALAFEIASRAAFREALQKGKSVLLEPIMKVEVVTPEDYTGSVIGDLNSRRGQIQGQDMRGNANVINAMVPLMNMFGYVNNLRSMSQGRANFTMQFDHYAEAPANVSAEVQKKFA</sequence>
<proteinExistence type="inferred from homology"/>